<sequence>MDNTIIRRAREGRIDDEMRKIAEAEGVSPEKLRDRIAKGQVVYIRNVKWPSEKVVAIGKGLSTKINVNLGTSTEVVDLDSELKKVEVANKWGDTLMDLSVGGDLDAIRRAVISKSKLPVGTVPVYQAFIEAFNKRSGGAYFTIDDLFNTIERQLKDGVAFMTIHAAVTKEAAIRVLKSDRVIPVVSRGGDMIIGWMLHNDAENPYLTHWDYLLELFAQYDAVISIGDALRPGAVADAHDEFHVGELVEAARLAKRAIKAGVQVMIEGPGHVPLNDVIWTIKLEKRLTGGVPYYVLGPLPTDVAAPYDHIASAVGAALAAAAGADLLCYITPAEHLSLPTVEQVEQGAIAYRIAAHIGDVVKLGRKARRWDDEVSYYRGRLMWDEMIKRLVDPERAYKVYTQYGPPKVKGCTMCGGYCPMNMVIQQARRLK</sequence>
<proteinExistence type="inferred from homology"/>
<protein>
    <recommendedName>
        <fullName evidence="1">Phosphomethylpyrimidine synthase</fullName>
        <ecNumber evidence="1">4.1.99.17</ecNumber>
    </recommendedName>
    <alternativeName>
        <fullName evidence="1">Hydroxymethylpyrimidine phosphate synthase</fullName>
        <shortName evidence="1">HMP-P synthase</shortName>
        <shortName evidence="1">HMP-phosphate synthase</shortName>
        <shortName evidence="1">HMPP synthase</shortName>
    </alternativeName>
    <alternativeName>
        <fullName evidence="1">Thiamine biosynthesis protein ThiC</fullName>
    </alternativeName>
</protein>
<dbReference type="EC" id="4.1.99.17" evidence="1"/>
<dbReference type="EMBL" id="AE009441">
    <property type="protein sequence ID" value="AAL62721.1"/>
    <property type="molecule type" value="Genomic_DNA"/>
</dbReference>
<dbReference type="SMR" id="Q8ZZC0"/>
<dbReference type="FunCoup" id="Q8ZZC0">
    <property type="interactions" value="89"/>
</dbReference>
<dbReference type="STRING" id="178306.PAE0333"/>
<dbReference type="EnsemblBacteria" id="AAL62721">
    <property type="protein sequence ID" value="AAL62721"/>
    <property type="gene ID" value="PAE0333"/>
</dbReference>
<dbReference type="KEGG" id="pai:PAE0333"/>
<dbReference type="PATRIC" id="fig|178306.9.peg.254"/>
<dbReference type="eggNOG" id="arCOG02741">
    <property type="taxonomic scope" value="Archaea"/>
</dbReference>
<dbReference type="HOGENOM" id="CLU_013181_2_2_2"/>
<dbReference type="InParanoid" id="Q8ZZC0"/>
<dbReference type="UniPathway" id="UPA00060"/>
<dbReference type="Proteomes" id="UP000002439">
    <property type="component" value="Chromosome"/>
</dbReference>
<dbReference type="GO" id="GO:0051539">
    <property type="term" value="F:4 iron, 4 sulfur cluster binding"/>
    <property type="evidence" value="ECO:0007669"/>
    <property type="project" value="UniProtKB-KW"/>
</dbReference>
<dbReference type="GO" id="GO:0016829">
    <property type="term" value="F:lyase activity"/>
    <property type="evidence" value="ECO:0007669"/>
    <property type="project" value="UniProtKB-KW"/>
</dbReference>
<dbReference type="GO" id="GO:0046872">
    <property type="term" value="F:metal ion binding"/>
    <property type="evidence" value="ECO:0007669"/>
    <property type="project" value="UniProtKB-KW"/>
</dbReference>
<dbReference type="GO" id="GO:0009228">
    <property type="term" value="P:thiamine biosynthetic process"/>
    <property type="evidence" value="ECO:0007669"/>
    <property type="project" value="UniProtKB-KW"/>
</dbReference>
<dbReference type="GO" id="GO:0009229">
    <property type="term" value="P:thiamine diphosphate biosynthetic process"/>
    <property type="evidence" value="ECO:0007669"/>
    <property type="project" value="UniProtKB-UniPathway"/>
</dbReference>
<dbReference type="Gene3D" id="3.20.20.540">
    <property type="entry name" value="Radical SAM ThiC family, central domain"/>
    <property type="match status" value="1"/>
</dbReference>
<dbReference type="InterPro" id="IPR038521">
    <property type="entry name" value="ThiC/Bza_core_dom"/>
</dbReference>
<dbReference type="InterPro" id="IPR002817">
    <property type="entry name" value="ThiC/BzaA/B"/>
</dbReference>
<dbReference type="NCBIfam" id="NF009895">
    <property type="entry name" value="PRK13352.1"/>
    <property type="match status" value="1"/>
</dbReference>
<dbReference type="NCBIfam" id="TIGR00190">
    <property type="entry name" value="thiC"/>
    <property type="match status" value="1"/>
</dbReference>
<dbReference type="PANTHER" id="PTHR30557:SF1">
    <property type="entry name" value="PHOSPHOMETHYLPYRIMIDINE SYNTHASE, CHLOROPLASTIC"/>
    <property type="match status" value="1"/>
</dbReference>
<dbReference type="PANTHER" id="PTHR30557">
    <property type="entry name" value="THIAMINE BIOSYNTHESIS PROTEIN THIC"/>
    <property type="match status" value="1"/>
</dbReference>
<dbReference type="Pfam" id="PF01964">
    <property type="entry name" value="ThiC_Rad_SAM"/>
    <property type="match status" value="1"/>
</dbReference>
<dbReference type="SFLD" id="SFLDF00407">
    <property type="entry name" value="phosphomethylpyrimidine_syntha"/>
    <property type="match status" value="1"/>
</dbReference>
<dbReference type="SFLD" id="SFLDS00113">
    <property type="entry name" value="Radical_SAM_Phosphomethylpyrim"/>
    <property type="match status" value="1"/>
</dbReference>
<keyword id="KW-0004">4Fe-4S</keyword>
<keyword id="KW-0408">Iron</keyword>
<keyword id="KW-0411">Iron-sulfur</keyword>
<keyword id="KW-0456">Lyase</keyword>
<keyword id="KW-0479">Metal-binding</keyword>
<keyword id="KW-1185">Reference proteome</keyword>
<keyword id="KW-0949">S-adenosyl-L-methionine</keyword>
<keyword id="KW-0784">Thiamine biosynthesis</keyword>
<keyword id="KW-0862">Zinc</keyword>
<gene>
    <name evidence="1" type="primary">thiC</name>
    <name type="ordered locus">PAE0333</name>
</gene>
<evidence type="ECO:0000255" key="1">
    <source>
        <dbReference type="HAMAP-Rule" id="MF_00089"/>
    </source>
</evidence>
<organism>
    <name type="scientific">Pyrobaculum aerophilum (strain ATCC 51768 / DSM 7523 / JCM 9630 / CIP 104966 / NBRC 100827 / IM2)</name>
    <dbReference type="NCBI Taxonomy" id="178306"/>
    <lineage>
        <taxon>Archaea</taxon>
        <taxon>Thermoproteota</taxon>
        <taxon>Thermoprotei</taxon>
        <taxon>Thermoproteales</taxon>
        <taxon>Thermoproteaceae</taxon>
        <taxon>Pyrobaculum</taxon>
    </lineage>
</organism>
<name>THIC_PYRAE</name>
<accession>Q8ZZC0</accession>
<feature type="chain" id="PRO_0000152870" description="Phosphomethylpyrimidine synthase">
    <location>
        <begin position="1"/>
        <end position="430"/>
    </location>
</feature>
<feature type="binding site" evidence="1">
    <location>
        <position position="68"/>
    </location>
    <ligand>
        <name>substrate</name>
    </ligand>
</feature>
<feature type="binding site" evidence="1">
    <location>
        <position position="96"/>
    </location>
    <ligand>
        <name>substrate</name>
    </ligand>
</feature>
<feature type="binding site" evidence="1">
    <location>
        <position position="125"/>
    </location>
    <ligand>
        <name>substrate</name>
    </ligand>
</feature>
<feature type="binding site" evidence="1">
    <location>
        <position position="164"/>
    </location>
    <ligand>
        <name>substrate</name>
    </ligand>
</feature>
<feature type="binding site" evidence="1">
    <location>
        <begin position="186"/>
        <end position="188"/>
    </location>
    <ligand>
        <name>substrate</name>
    </ligand>
</feature>
<feature type="binding site" evidence="1">
    <location>
        <begin position="227"/>
        <end position="230"/>
    </location>
    <ligand>
        <name>substrate</name>
    </ligand>
</feature>
<feature type="binding site" evidence="1">
    <location>
        <position position="266"/>
    </location>
    <ligand>
        <name>substrate</name>
    </ligand>
</feature>
<feature type="binding site" evidence="1">
    <location>
        <position position="270"/>
    </location>
    <ligand>
        <name>Zn(2+)</name>
        <dbReference type="ChEBI" id="CHEBI:29105"/>
    </ligand>
</feature>
<feature type="binding site" evidence="1">
    <location>
        <position position="293"/>
    </location>
    <ligand>
        <name>substrate</name>
    </ligand>
</feature>
<feature type="binding site" evidence="1">
    <location>
        <position position="334"/>
    </location>
    <ligand>
        <name>Zn(2+)</name>
        <dbReference type="ChEBI" id="CHEBI:29105"/>
    </ligand>
</feature>
<feature type="binding site" evidence="1">
    <location>
        <position position="410"/>
    </location>
    <ligand>
        <name>[4Fe-4S] cluster</name>
        <dbReference type="ChEBI" id="CHEBI:49883"/>
        <note>4Fe-4S-S-AdoMet</note>
    </ligand>
</feature>
<feature type="binding site" evidence="1">
    <location>
        <position position="413"/>
    </location>
    <ligand>
        <name>[4Fe-4S] cluster</name>
        <dbReference type="ChEBI" id="CHEBI:49883"/>
        <note>4Fe-4S-S-AdoMet</note>
    </ligand>
</feature>
<feature type="binding site" evidence="1">
    <location>
        <position position="417"/>
    </location>
    <ligand>
        <name>[4Fe-4S] cluster</name>
        <dbReference type="ChEBI" id="CHEBI:49883"/>
        <note>4Fe-4S-S-AdoMet</note>
    </ligand>
</feature>
<comment type="function">
    <text evidence="1">Catalyzes the synthesis of the hydroxymethylpyrimidine phosphate (HMP-P) moiety of thiamine from aminoimidazole ribotide (AIR) in a radical S-adenosyl-L-methionine (SAM)-dependent reaction.</text>
</comment>
<comment type="catalytic activity">
    <reaction evidence="1">
        <text>5-amino-1-(5-phospho-beta-D-ribosyl)imidazole + S-adenosyl-L-methionine = 4-amino-2-methyl-5-(phosphooxymethyl)pyrimidine + CO + 5'-deoxyadenosine + formate + L-methionine + 3 H(+)</text>
        <dbReference type="Rhea" id="RHEA:24840"/>
        <dbReference type="ChEBI" id="CHEBI:15378"/>
        <dbReference type="ChEBI" id="CHEBI:15740"/>
        <dbReference type="ChEBI" id="CHEBI:17245"/>
        <dbReference type="ChEBI" id="CHEBI:17319"/>
        <dbReference type="ChEBI" id="CHEBI:57844"/>
        <dbReference type="ChEBI" id="CHEBI:58354"/>
        <dbReference type="ChEBI" id="CHEBI:59789"/>
        <dbReference type="ChEBI" id="CHEBI:137981"/>
        <dbReference type="EC" id="4.1.99.17"/>
    </reaction>
</comment>
<comment type="cofactor">
    <cofactor evidence="1">
        <name>[4Fe-4S] cluster</name>
        <dbReference type="ChEBI" id="CHEBI:49883"/>
    </cofactor>
    <text evidence="1">Binds 1 [4Fe-4S] cluster per subunit. The cluster is coordinated with 3 cysteines and an exchangeable S-adenosyl-L-methionine.</text>
</comment>
<comment type="pathway">
    <text evidence="1">Cofactor biosynthesis; thiamine diphosphate biosynthesis.</text>
</comment>
<comment type="similarity">
    <text evidence="1">Belongs to the ThiC family.</text>
</comment>
<reference key="1">
    <citation type="journal article" date="2002" name="Proc. Natl. Acad. Sci. U.S.A.">
        <title>Genome sequence of the hyperthermophilic crenarchaeon Pyrobaculum aerophilum.</title>
        <authorList>
            <person name="Fitz-Gibbon S.T."/>
            <person name="Ladner H."/>
            <person name="Kim U.-J."/>
            <person name="Stetter K.O."/>
            <person name="Simon M.I."/>
            <person name="Miller J.H."/>
        </authorList>
    </citation>
    <scope>NUCLEOTIDE SEQUENCE [LARGE SCALE GENOMIC DNA]</scope>
    <source>
        <strain>ATCC 51768 / DSM 7523 / JCM 9630 / CIP 104966 / NBRC 100827 / IM2</strain>
    </source>
</reference>